<sequence>MSDQQQPPVYKIALGIEYDGSKYYGWQRQNEVRSVQEKLEKALSQVANEPITVFCAGRTDAGVHGTGQVVHFETTALRKDAAWTLGVNANLPGDIAVRWVKTVPDDFHARFSATARRYRYIIYNHRLRPAVLSKGVTHFYEPLDAERMHRAAQCLLGENDFTSFRAVQCQSRTPWRNVMHINVTRHGPYVVVDIKANAFVHHMVRNIVGSLMEVGAHNQPESWIAELLAAKDRTLAAATAKAEGLYLVAVDYPDRYDLPKPPMGPLFLAD</sequence>
<proteinExistence type="inferred from homology"/>
<dbReference type="EC" id="5.4.99.12" evidence="1"/>
<dbReference type="EMBL" id="CP000948">
    <property type="protein sequence ID" value="ACB03476.1"/>
    <property type="molecule type" value="Genomic_DNA"/>
</dbReference>
<dbReference type="RefSeq" id="WP_001283586.1">
    <property type="nucleotide sequence ID" value="NC_010473.1"/>
</dbReference>
<dbReference type="SMR" id="B1X929"/>
<dbReference type="KEGG" id="ecd:ECDH10B_2480"/>
<dbReference type="HOGENOM" id="CLU_014673_0_2_6"/>
<dbReference type="GO" id="GO:0003723">
    <property type="term" value="F:RNA binding"/>
    <property type="evidence" value="ECO:0007669"/>
    <property type="project" value="InterPro"/>
</dbReference>
<dbReference type="GO" id="GO:0160147">
    <property type="term" value="F:tRNA pseudouridine(38-40) synthase activity"/>
    <property type="evidence" value="ECO:0007669"/>
    <property type="project" value="UniProtKB-EC"/>
</dbReference>
<dbReference type="GO" id="GO:0031119">
    <property type="term" value="P:tRNA pseudouridine synthesis"/>
    <property type="evidence" value="ECO:0007669"/>
    <property type="project" value="UniProtKB-UniRule"/>
</dbReference>
<dbReference type="CDD" id="cd02570">
    <property type="entry name" value="PseudoU_synth_EcTruA"/>
    <property type="match status" value="1"/>
</dbReference>
<dbReference type="FunFam" id="3.30.70.580:FF:000001">
    <property type="entry name" value="tRNA pseudouridine synthase A"/>
    <property type="match status" value="1"/>
</dbReference>
<dbReference type="FunFam" id="3.30.70.660:FF:000001">
    <property type="entry name" value="tRNA pseudouridine synthase A"/>
    <property type="match status" value="1"/>
</dbReference>
<dbReference type="Gene3D" id="3.30.70.660">
    <property type="entry name" value="Pseudouridine synthase I, catalytic domain, C-terminal subdomain"/>
    <property type="match status" value="1"/>
</dbReference>
<dbReference type="Gene3D" id="3.30.70.580">
    <property type="entry name" value="Pseudouridine synthase I, catalytic domain, N-terminal subdomain"/>
    <property type="match status" value="1"/>
</dbReference>
<dbReference type="HAMAP" id="MF_00171">
    <property type="entry name" value="TruA"/>
    <property type="match status" value="1"/>
</dbReference>
<dbReference type="InterPro" id="IPR020103">
    <property type="entry name" value="PsdUridine_synth_cat_dom_sf"/>
</dbReference>
<dbReference type="InterPro" id="IPR001406">
    <property type="entry name" value="PsdUridine_synth_TruA"/>
</dbReference>
<dbReference type="InterPro" id="IPR020097">
    <property type="entry name" value="PsdUridine_synth_TruA_a/b_dom"/>
</dbReference>
<dbReference type="InterPro" id="IPR020095">
    <property type="entry name" value="PsdUridine_synth_TruA_C"/>
</dbReference>
<dbReference type="InterPro" id="IPR020094">
    <property type="entry name" value="TruA/RsuA/RluB/E/F_N"/>
</dbReference>
<dbReference type="NCBIfam" id="TIGR00071">
    <property type="entry name" value="hisT_truA"/>
    <property type="match status" value="1"/>
</dbReference>
<dbReference type="PANTHER" id="PTHR11142">
    <property type="entry name" value="PSEUDOURIDYLATE SYNTHASE"/>
    <property type="match status" value="1"/>
</dbReference>
<dbReference type="PANTHER" id="PTHR11142:SF0">
    <property type="entry name" value="TRNA PSEUDOURIDINE SYNTHASE-LIKE 1"/>
    <property type="match status" value="1"/>
</dbReference>
<dbReference type="Pfam" id="PF01416">
    <property type="entry name" value="PseudoU_synth_1"/>
    <property type="match status" value="2"/>
</dbReference>
<dbReference type="PIRSF" id="PIRSF001430">
    <property type="entry name" value="tRNA_psdUrid_synth"/>
    <property type="match status" value="1"/>
</dbReference>
<dbReference type="SUPFAM" id="SSF55120">
    <property type="entry name" value="Pseudouridine synthase"/>
    <property type="match status" value="1"/>
</dbReference>
<protein>
    <recommendedName>
        <fullName evidence="1">tRNA pseudouridine synthase A</fullName>
        <ecNumber evidence="1">5.4.99.12</ecNumber>
    </recommendedName>
    <alternativeName>
        <fullName evidence="1">tRNA pseudouridine(38-40) synthase</fullName>
    </alternativeName>
    <alternativeName>
        <fullName evidence="1">tRNA pseudouridylate synthase I</fullName>
    </alternativeName>
    <alternativeName>
        <fullName evidence="1">tRNA-uridine isomerase I</fullName>
    </alternativeName>
</protein>
<organism>
    <name type="scientific">Escherichia coli (strain K12 / DH10B)</name>
    <dbReference type="NCBI Taxonomy" id="316385"/>
    <lineage>
        <taxon>Bacteria</taxon>
        <taxon>Pseudomonadati</taxon>
        <taxon>Pseudomonadota</taxon>
        <taxon>Gammaproteobacteria</taxon>
        <taxon>Enterobacterales</taxon>
        <taxon>Enterobacteriaceae</taxon>
        <taxon>Escherichia</taxon>
    </lineage>
</organism>
<name>TRUA_ECODH</name>
<evidence type="ECO:0000255" key="1">
    <source>
        <dbReference type="HAMAP-Rule" id="MF_00171"/>
    </source>
</evidence>
<accession>B1X929</accession>
<reference key="1">
    <citation type="journal article" date="2008" name="J. Bacteriol.">
        <title>The complete genome sequence of Escherichia coli DH10B: insights into the biology of a laboratory workhorse.</title>
        <authorList>
            <person name="Durfee T."/>
            <person name="Nelson R."/>
            <person name="Baldwin S."/>
            <person name="Plunkett G. III"/>
            <person name="Burland V."/>
            <person name="Mau B."/>
            <person name="Petrosino J.F."/>
            <person name="Qin X."/>
            <person name="Muzny D.M."/>
            <person name="Ayele M."/>
            <person name="Gibbs R.A."/>
            <person name="Csorgo B."/>
            <person name="Posfai G."/>
            <person name="Weinstock G.M."/>
            <person name="Blattner F.R."/>
        </authorList>
    </citation>
    <scope>NUCLEOTIDE SEQUENCE [LARGE SCALE GENOMIC DNA]</scope>
    <source>
        <strain>K12 / DH10B</strain>
    </source>
</reference>
<feature type="chain" id="PRO_1000097740" description="tRNA pseudouridine synthase A">
    <location>
        <begin position="1"/>
        <end position="270"/>
    </location>
</feature>
<feature type="region of interest" description="RNA binding" evidence="1">
    <location>
        <begin position="107"/>
        <end position="111"/>
    </location>
</feature>
<feature type="region of interest" description="Interaction with tRNA" evidence="1">
    <location>
        <begin position="168"/>
        <end position="172"/>
    </location>
</feature>
<feature type="active site" description="Nucleophile" evidence="1">
    <location>
        <position position="60"/>
    </location>
</feature>
<feature type="binding site" evidence="1">
    <location>
        <position position="118"/>
    </location>
    <ligand>
        <name>substrate</name>
    </ligand>
</feature>
<feature type="site" description="Interaction with tRNA; Important for base-flipping" evidence="1">
    <location>
        <position position="58"/>
    </location>
</feature>
<feature type="site" description="Interaction with tRNA" evidence="1">
    <location>
        <position position="78"/>
    </location>
</feature>
<feature type="site" description="Interaction with tRNA" evidence="1">
    <location>
        <position position="110"/>
    </location>
</feature>
<feature type="site" description="Interaction with tRNA" evidence="1">
    <location>
        <position position="126"/>
    </location>
</feature>
<feature type="site" description="Interaction with tRNA" evidence="1">
    <location>
        <position position="139"/>
    </location>
</feature>
<gene>
    <name evidence="1" type="primary">truA</name>
    <name type="ordered locus">ECDH10B_2480</name>
</gene>
<comment type="function">
    <text evidence="1">Formation of pseudouridine at positions 38, 39 and 40 in the anticodon stem and loop of transfer RNAs.</text>
</comment>
<comment type="catalytic activity">
    <reaction evidence="1">
        <text>uridine(38/39/40) in tRNA = pseudouridine(38/39/40) in tRNA</text>
        <dbReference type="Rhea" id="RHEA:22376"/>
        <dbReference type="Rhea" id="RHEA-COMP:10085"/>
        <dbReference type="Rhea" id="RHEA-COMP:10087"/>
        <dbReference type="ChEBI" id="CHEBI:65314"/>
        <dbReference type="ChEBI" id="CHEBI:65315"/>
        <dbReference type="EC" id="5.4.99.12"/>
    </reaction>
</comment>
<comment type="subunit">
    <text evidence="1">Homodimer.</text>
</comment>
<comment type="similarity">
    <text evidence="1">Belongs to the tRNA pseudouridine synthase TruA family.</text>
</comment>
<keyword id="KW-0413">Isomerase</keyword>
<keyword id="KW-0819">tRNA processing</keyword>